<dbReference type="EC" id="6.1.1.15" evidence="1"/>
<dbReference type="EMBL" id="CP000123">
    <property type="protein sequence ID" value="ABC01299.1"/>
    <property type="status" value="ALT_INIT"/>
    <property type="molecule type" value="Genomic_DNA"/>
</dbReference>
<dbReference type="RefSeq" id="WP_011387204.1">
    <property type="nucleotide sequence ID" value="NC_007633.1"/>
</dbReference>
<dbReference type="SMR" id="Q2SSG0"/>
<dbReference type="GeneID" id="23778726"/>
<dbReference type="KEGG" id="mcp:MCAP_0318"/>
<dbReference type="HOGENOM" id="CLU_001882_4_2_14"/>
<dbReference type="PhylomeDB" id="Q2SSG0"/>
<dbReference type="Proteomes" id="UP000001928">
    <property type="component" value="Chromosome"/>
</dbReference>
<dbReference type="GO" id="GO:0017101">
    <property type="term" value="C:aminoacyl-tRNA synthetase multienzyme complex"/>
    <property type="evidence" value="ECO:0007669"/>
    <property type="project" value="TreeGrafter"/>
</dbReference>
<dbReference type="GO" id="GO:0005737">
    <property type="term" value="C:cytoplasm"/>
    <property type="evidence" value="ECO:0007669"/>
    <property type="project" value="UniProtKB-SubCell"/>
</dbReference>
<dbReference type="GO" id="GO:0005524">
    <property type="term" value="F:ATP binding"/>
    <property type="evidence" value="ECO:0007669"/>
    <property type="project" value="UniProtKB-UniRule"/>
</dbReference>
<dbReference type="GO" id="GO:0004827">
    <property type="term" value="F:proline-tRNA ligase activity"/>
    <property type="evidence" value="ECO:0007669"/>
    <property type="project" value="UniProtKB-UniRule"/>
</dbReference>
<dbReference type="GO" id="GO:0006433">
    <property type="term" value="P:prolyl-tRNA aminoacylation"/>
    <property type="evidence" value="ECO:0007669"/>
    <property type="project" value="UniProtKB-UniRule"/>
</dbReference>
<dbReference type="CDD" id="cd00778">
    <property type="entry name" value="ProRS_core_arch_euk"/>
    <property type="match status" value="1"/>
</dbReference>
<dbReference type="FunFam" id="3.30.930.10:FF:000037">
    <property type="entry name" value="Proline--tRNA ligase"/>
    <property type="match status" value="1"/>
</dbReference>
<dbReference type="Gene3D" id="3.40.50.800">
    <property type="entry name" value="Anticodon-binding domain"/>
    <property type="match status" value="1"/>
</dbReference>
<dbReference type="Gene3D" id="3.30.930.10">
    <property type="entry name" value="Bira Bifunctional Protein, Domain 2"/>
    <property type="match status" value="1"/>
</dbReference>
<dbReference type="Gene3D" id="3.30.110.30">
    <property type="entry name" value="C-terminal domain of ProRS"/>
    <property type="match status" value="1"/>
</dbReference>
<dbReference type="HAMAP" id="MF_01571">
    <property type="entry name" value="Pro_tRNA_synth_type3"/>
    <property type="match status" value="1"/>
</dbReference>
<dbReference type="InterPro" id="IPR002314">
    <property type="entry name" value="aa-tRNA-synt_IIb"/>
</dbReference>
<dbReference type="InterPro" id="IPR006195">
    <property type="entry name" value="aa-tRNA-synth_II"/>
</dbReference>
<dbReference type="InterPro" id="IPR045864">
    <property type="entry name" value="aa-tRNA-synth_II/BPL/LPL"/>
</dbReference>
<dbReference type="InterPro" id="IPR004154">
    <property type="entry name" value="Anticodon-bd"/>
</dbReference>
<dbReference type="InterPro" id="IPR036621">
    <property type="entry name" value="Anticodon-bd_dom_sf"/>
</dbReference>
<dbReference type="InterPro" id="IPR002316">
    <property type="entry name" value="Pro-tRNA-ligase_IIa"/>
</dbReference>
<dbReference type="InterPro" id="IPR004499">
    <property type="entry name" value="Pro-tRNA-ligase_IIa_arc-type"/>
</dbReference>
<dbReference type="InterPro" id="IPR016061">
    <property type="entry name" value="Pro-tRNA_ligase_II_C"/>
</dbReference>
<dbReference type="InterPro" id="IPR017449">
    <property type="entry name" value="Pro-tRNA_synth_II"/>
</dbReference>
<dbReference type="InterPro" id="IPR033721">
    <property type="entry name" value="ProRS_core_arch_euk"/>
</dbReference>
<dbReference type="NCBIfam" id="TIGR00408">
    <property type="entry name" value="proS_fam_I"/>
    <property type="match status" value="1"/>
</dbReference>
<dbReference type="PANTHER" id="PTHR43382:SF2">
    <property type="entry name" value="BIFUNCTIONAL GLUTAMATE_PROLINE--TRNA LIGASE"/>
    <property type="match status" value="1"/>
</dbReference>
<dbReference type="PANTHER" id="PTHR43382">
    <property type="entry name" value="PROLYL-TRNA SYNTHETASE"/>
    <property type="match status" value="1"/>
</dbReference>
<dbReference type="Pfam" id="PF03129">
    <property type="entry name" value="HGTP_anticodon"/>
    <property type="match status" value="1"/>
</dbReference>
<dbReference type="Pfam" id="PF09180">
    <property type="entry name" value="ProRS-C_1"/>
    <property type="match status" value="1"/>
</dbReference>
<dbReference type="Pfam" id="PF00587">
    <property type="entry name" value="tRNA-synt_2b"/>
    <property type="match status" value="1"/>
</dbReference>
<dbReference type="PRINTS" id="PR01046">
    <property type="entry name" value="TRNASYNTHPRO"/>
</dbReference>
<dbReference type="SMART" id="SM00946">
    <property type="entry name" value="ProRS-C_1"/>
    <property type="match status" value="1"/>
</dbReference>
<dbReference type="SUPFAM" id="SSF64586">
    <property type="entry name" value="C-terminal domain of ProRS"/>
    <property type="match status" value="1"/>
</dbReference>
<dbReference type="SUPFAM" id="SSF52954">
    <property type="entry name" value="Class II aaRS ABD-related"/>
    <property type="match status" value="1"/>
</dbReference>
<dbReference type="SUPFAM" id="SSF55681">
    <property type="entry name" value="Class II aaRS and biotin synthetases"/>
    <property type="match status" value="1"/>
</dbReference>
<dbReference type="PROSITE" id="PS50862">
    <property type="entry name" value="AA_TRNA_LIGASE_II"/>
    <property type="match status" value="1"/>
</dbReference>
<accession>Q2SSG0</accession>
<proteinExistence type="inferred from homology"/>
<organism>
    <name type="scientific">Mycoplasma capricolum subsp. capricolum (strain California kid / ATCC 27343 / NCTC 10154)</name>
    <dbReference type="NCBI Taxonomy" id="340047"/>
    <lineage>
        <taxon>Bacteria</taxon>
        <taxon>Bacillati</taxon>
        <taxon>Mycoplasmatota</taxon>
        <taxon>Mollicutes</taxon>
        <taxon>Mycoplasmataceae</taxon>
        <taxon>Mycoplasma</taxon>
    </lineage>
</organism>
<evidence type="ECO:0000255" key="1">
    <source>
        <dbReference type="HAMAP-Rule" id="MF_01571"/>
    </source>
</evidence>
<evidence type="ECO:0000305" key="2"/>
<feature type="chain" id="PRO_0000249132" description="Proline--tRNA ligase">
    <location>
        <begin position="1"/>
        <end position="474"/>
    </location>
</feature>
<keyword id="KW-0030">Aminoacyl-tRNA synthetase</keyword>
<keyword id="KW-0067">ATP-binding</keyword>
<keyword id="KW-0963">Cytoplasm</keyword>
<keyword id="KW-0436">Ligase</keyword>
<keyword id="KW-0547">Nucleotide-binding</keyword>
<keyword id="KW-0648">Protein biosynthesis</keyword>
<sequence length="474" mass="55415">MKKQLNKITPRNIDFSQWYTDIVLNTKLASYGPVKGTMIFRPYGYRIWELIQKYLDEEFKKVNVDNVYFPLLIPESLFNKEKDHIDGFSPEIATVTRVGQKQLEENLFIRPTSEVLMMDYFSNEINSYRDLPLIYNQWCNVMRWEKTTRPFLRTSEFLWQEGHTVHSSYNEAENFCLKILNIYEKFAKEILLLPVICGKKTEKEKFAGAKDTYTIESLMFDGQALQCGTSHFFADNFTKVYDIKFQNKENKLEHAYSTSWGVSTRLIGALIMTHSDDNGLVLPSKISPIQVQIIQIKNTEQIDQVVEIIKDKLSDYRIDVDNSDKSFGFKISEAEIKGIPIRIEIGPRDLENNQITISRRDQQENKIKVDYKDIKSVVDQMIKDYDLALYNNALENRKNRTFKANTIEEYIEILKQNQGFVLVPFCGRVECEQDIKTKTLTNSRCIPFDQKEVKAKCFNCKKDTCLQVIFARAY</sequence>
<name>SYP_MYCCT</name>
<protein>
    <recommendedName>
        <fullName evidence="1">Proline--tRNA ligase</fullName>
        <ecNumber evidence="1">6.1.1.15</ecNumber>
    </recommendedName>
    <alternativeName>
        <fullName evidence="1">Prolyl-tRNA synthetase</fullName>
        <shortName evidence="1">ProRS</shortName>
    </alternativeName>
</protein>
<comment type="function">
    <text evidence="1">Catalyzes the attachment of proline to tRNA(Pro) in a two-step reaction: proline is first activated by ATP to form Pro-AMP and then transferred to the acceptor end of tRNA(Pro).</text>
</comment>
<comment type="catalytic activity">
    <reaction evidence="1">
        <text>tRNA(Pro) + L-proline + ATP = L-prolyl-tRNA(Pro) + AMP + diphosphate</text>
        <dbReference type="Rhea" id="RHEA:14305"/>
        <dbReference type="Rhea" id="RHEA-COMP:9700"/>
        <dbReference type="Rhea" id="RHEA-COMP:9702"/>
        <dbReference type="ChEBI" id="CHEBI:30616"/>
        <dbReference type="ChEBI" id="CHEBI:33019"/>
        <dbReference type="ChEBI" id="CHEBI:60039"/>
        <dbReference type="ChEBI" id="CHEBI:78442"/>
        <dbReference type="ChEBI" id="CHEBI:78532"/>
        <dbReference type="ChEBI" id="CHEBI:456215"/>
        <dbReference type="EC" id="6.1.1.15"/>
    </reaction>
</comment>
<comment type="subunit">
    <text evidence="1">Homodimer.</text>
</comment>
<comment type="subcellular location">
    <subcellularLocation>
        <location evidence="1">Cytoplasm</location>
    </subcellularLocation>
</comment>
<comment type="domain">
    <text evidence="1">Consists of three domains: the N-terminal catalytic domain, the anticodon-binding domain and the C-terminal extension.</text>
</comment>
<comment type="similarity">
    <text evidence="1">Belongs to the class-II aminoacyl-tRNA synthetase family. ProS type 3 subfamily.</text>
</comment>
<comment type="sequence caution" evidence="2">
    <conflict type="erroneous initiation">
        <sequence resource="EMBL-CDS" id="ABC01299"/>
    </conflict>
</comment>
<gene>
    <name evidence="1" type="primary">proS</name>
    <name type="ordered locus">MCAP_0318</name>
</gene>
<reference key="1">
    <citation type="submission" date="2005-09" db="EMBL/GenBank/DDBJ databases">
        <authorList>
            <person name="Glass J.I."/>
            <person name="Lartigue C."/>
            <person name="Pfannkoch C."/>
            <person name="Baden-Tillson H."/>
            <person name="Smith H.O."/>
            <person name="Venter J.C."/>
            <person name="Roske K."/>
            <person name="Wise K.S."/>
            <person name="Calcutt M.J."/>
            <person name="Nelson W.C."/>
            <person name="Nierman W.C."/>
        </authorList>
    </citation>
    <scope>NUCLEOTIDE SEQUENCE [LARGE SCALE GENOMIC DNA]</scope>
    <source>
        <strain>California kid / ATCC 27343 / NCTC 10154</strain>
    </source>
</reference>